<evidence type="ECO:0000255" key="1">
    <source>
        <dbReference type="HAMAP-Rule" id="MF_00337"/>
    </source>
</evidence>
<comment type="function">
    <text evidence="1">Bidirectionally degrades single-stranded DNA into large acid-insoluble oligonucleotides, which are then degraded further into small acid-soluble oligonucleotides.</text>
</comment>
<comment type="catalytic activity">
    <reaction evidence="1">
        <text>Exonucleolytic cleavage in either 5'- to 3'- or 3'- to 5'-direction to yield nucleoside 5'-phosphates.</text>
        <dbReference type="EC" id="3.1.11.6"/>
    </reaction>
</comment>
<comment type="subunit">
    <text evidence="1">Heterooligomer composed of large and small subunits.</text>
</comment>
<comment type="subcellular location">
    <subcellularLocation>
        <location evidence="1">Cytoplasm</location>
    </subcellularLocation>
</comment>
<comment type="similarity">
    <text evidence="1">Belongs to the XseB family.</text>
</comment>
<feature type="chain" id="PRO_0000206962" description="Exodeoxyribonuclease 7 small subunit">
    <location>
        <begin position="1"/>
        <end position="76"/>
    </location>
</feature>
<dbReference type="EC" id="3.1.11.6" evidence="1"/>
<dbReference type="EMBL" id="AE017354">
    <property type="protein sequence ID" value="AAU28391.1"/>
    <property type="molecule type" value="Genomic_DNA"/>
</dbReference>
<dbReference type="RefSeq" id="WP_010948035.1">
    <property type="nucleotide sequence ID" value="NC_002942.5"/>
</dbReference>
<dbReference type="RefSeq" id="YP_096338.1">
    <property type="nucleotide sequence ID" value="NC_002942.5"/>
</dbReference>
<dbReference type="SMR" id="Q5ZT36"/>
<dbReference type="STRING" id="272624.lpg2329"/>
<dbReference type="PaxDb" id="272624-lpg2329"/>
<dbReference type="KEGG" id="lpn:lpg2329"/>
<dbReference type="PATRIC" id="fig|272624.6.peg.2446"/>
<dbReference type="eggNOG" id="COG1722">
    <property type="taxonomic scope" value="Bacteria"/>
</dbReference>
<dbReference type="HOGENOM" id="CLU_145918_3_2_6"/>
<dbReference type="OrthoDB" id="9801128at2"/>
<dbReference type="Proteomes" id="UP000000609">
    <property type="component" value="Chromosome"/>
</dbReference>
<dbReference type="GO" id="GO:0005829">
    <property type="term" value="C:cytosol"/>
    <property type="evidence" value="ECO:0007669"/>
    <property type="project" value="TreeGrafter"/>
</dbReference>
<dbReference type="GO" id="GO:0009318">
    <property type="term" value="C:exodeoxyribonuclease VII complex"/>
    <property type="evidence" value="ECO:0007669"/>
    <property type="project" value="InterPro"/>
</dbReference>
<dbReference type="GO" id="GO:0008855">
    <property type="term" value="F:exodeoxyribonuclease VII activity"/>
    <property type="evidence" value="ECO:0007669"/>
    <property type="project" value="UniProtKB-UniRule"/>
</dbReference>
<dbReference type="GO" id="GO:0006308">
    <property type="term" value="P:DNA catabolic process"/>
    <property type="evidence" value="ECO:0007669"/>
    <property type="project" value="UniProtKB-UniRule"/>
</dbReference>
<dbReference type="Gene3D" id="1.10.287.1040">
    <property type="entry name" value="Exonuclease VII, small subunit"/>
    <property type="match status" value="1"/>
</dbReference>
<dbReference type="HAMAP" id="MF_00337">
    <property type="entry name" value="Exonuc_7_S"/>
    <property type="match status" value="1"/>
</dbReference>
<dbReference type="InterPro" id="IPR003761">
    <property type="entry name" value="Exonuc_VII_S"/>
</dbReference>
<dbReference type="InterPro" id="IPR037004">
    <property type="entry name" value="Exonuc_VII_ssu_sf"/>
</dbReference>
<dbReference type="NCBIfam" id="NF002139">
    <property type="entry name" value="PRK00977.1-3"/>
    <property type="match status" value="1"/>
</dbReference>
<dbReference type="NCBIfam" id="NF002140">
    <property type="entry name" value="PRK00977.1-4"/>
    <property type="match status" value="1"/>
</dbReference>
<dbReference type="NCBIfam" id="TIGR01280">
    <property type="entry name" value="xseB"/>
    <property type="match status" value="1"/>
</dbReference>
<dbReference type="PANTHER" id="PTHR34137">
    <property type="entry name" value="EXODEOXYRIBONUCLEASE 7 SMALL SUBUNIT"/>
    <property type="match status" value="1"/>
</dbReference>
<dbReference type="PANTHER" id="PTHR34137:SF1">
    <property type="entry name" value="EXODEOXYRIBONUCLEASE 7 SMALL SUBUNIT"/>
    <property type="match status" value="1"/>
</dbReference>
<dbReference type="Pfam" id="PF02609">
    <property type="entry name" value="Exonuc_VII_S"/>
    <property type="match status" value="1"/>
</dbReference>
<dbReference type="PIRSF" id="PIRSF006488">
    <property type="entry name" value="Exonuc_VII_S"/>
    <property type="match status" value="1"/>
</dbReference>
<dbReference type="SUPFAM" id="SSF116842">
    <property type="entry name" value="XseB-like"/>
    <property type="match status" value="1"/>
</dbReference>
<accession>Q5ZT36</accession>
<keyword id="KW-0963">Cytoplasm</keyword>
<keyword id="KW-0269">Exonuclease</keyword>
<keyword id="KW-0378">Hydrolase</keyword>
<keyword id="KW-0540">Nuclease</keyword>
<keyword id="KW-1185">Reference proteome</keyword>
<name>EX7S_LEGPH</name>
<reference key="1">
    <citation type="journal article" date="2004" name="Science">
        <title>The genomic sequence of the accidental pathogen Legionella pneumophila.</title>
        <authorList>
            <person name="Chien M."/>
            <person name="Morozova I."/>
            <person name="Shi S."/>
            <person name="Sheng H."/>
            <person name="Chen J."/>
            <person name="Gomez S.M."/>
            <person name="Asamani G."/>
            <person name="Hill K."/>
            <person name="Nuara J."/>
            <person name="Feder M."/>
            <person name="Rineer J."/>
            <person name="Greenberg J.J."/>
            <person name="Steshenko V."/>
            <person name="Park S.H."/>
            <person name="Zhao B."/>
            <person name="Teplitskaya E."/>
            <person name="Edwards J.R."/>
            <person name="Pampou S."/>
            <person name="Georghiou A."/>
            <person name="Chou I.-C."/>
            <person name="Iannuccilli W."/>
            <person name="Ulz M.E."/>
            <person name="Kim D.H."/>
            <person name="Geringer-Sameth A."/>
            <person name="Goldsberry C."/>
            <person name="Morozov P."/>
            <person name="Fischer S.G."/>
            <person name="Segal G."/>
            <person name="Qu X."/>
            <person name="Rzhetsky A."/>
            <person name="Zhang P."/>
            <person name="Cayanis E."/>
            <person name="De Jong P.J."/>
            <person name="Ju J."/>
            <person name="Kalachikov S."/>
            <person name="Shuman H.A."/>
            <person name="Russo J.J."/>
        </authorList>
    </citation>
    <scope>NUCLEOTIDE SEQUENCE [LARGE SCALE GENOMIC DNA]</scope>
    <source>
        <strain>Philadelphia 1 / ATCC 33152 / DSM 7513</strain>
    </source>
</reference>
<sequence length="76" mass="8611">MSKGIHFEQSITELEEIVRQLEKGELSLEESLKQFEKGISLARRCQNALNQAEQKIETLTGTDSNIELDSDEQTSD</sequence>
<protein>
    <recommendedName>
        <fullName evidence="1">Exodeoxyribonuclease 7 small subunit</fullName>
        <ecNumber evidence="1">3.1.11.6</ecNumber>
    </recommendedName>
    <alternativeName>
        <fullName evidence="1">Exodeoxyribonuclease VII small subunit</fullName>
        <shortName evidence="1">Exonuclease VII small subunit</shortName>
    </alternativeName>
</protein>
<gene>
    <name evidence="1" type="primary">xseB</name>
    <name type="ordered locus">lpg2329</name>
</gene>
<organism>
    <name type="scientific">Legionella pneumophila subsp. pneumophila (strain Philadelphia 1 / ATCC 33152 / DSM 7513)</name>
    <dbReference type="NCBI Taxonomy" id="272624"/>
    <lineage>
        <taxon>Bacteria</taxon>
        <taxon>Pseudomonadati</taxon>
        <taxon>Pseudomonadota</taxon>
        <taxon>Gammaproteobacteria</taxon>
        <taxon>Legionellales</taxon>
        <taxon>Legionellaceae</taxon>
        <taxon>Legionella</taxon>
    </lineage>
</organism>
<proteinExistence type="inferred from homology"/>